<proteinExistence type="evidence at transcript level"/>
<keyword id="KW-1064">Adaptive immunity</keyword>
<keyword id="KW-0202">Cytokine</keyword>
<keyword id="KW-1015">Disulfide bond</keyword>
<keyword id="KW-0325">Glycoprotein</keyword>
<keyword id="KW-0339">Growth factor</keyword>
<keyword id="KW-0391">Immunity</keyword>
<keyword id="KW-0964">Secreted</keyword>
<keyword id="KW-0732">Signal</keyword>
<accession>O97513</accession>
<evidence type="ECO:0000250" key="1"/>
<evidence type="ECO:0000250" key="2">
    <source>
        <dbReference type="UniProtKB" id="P60568"/>
    </source>
</evidence>
<evidence type="ECO:0000305" key="3"/>
<feature type="signal peptide" evidence="1">
    <location>
        <begin position="1"/>
        <end position="20"/>
    </location>
</feature>
<feature type="chain" id="PRO_0000015495" description="Interleukin-2">
    <location>
        <begin position="21"/>
        <end position="152" status="greater than"/>
    </location>
</feature>
<feature type="glycosylation site" description="O-linked (GalNAc...) threonine" evidence="1">
    <location>
        <position position="23"/>
    </location>
</feature>
<feature type="disulfide bond" evidence="1">
    <location>
        <begin position="78"/>
        <end position="126"/>
    </location>
</feature>
<feature type="non-terminal residue">
    <location>
        <position position="152"/>
    </location>
</feature>
<sequence length="152" mass="17424">MYRMQLLSCIALTLALVANGAPTSSSTENTKKQVQSLLQDLQLLLKEINNYENLKLFRMLTFKFYMPKKATELKHLQCLAEELKPLEDVLNVAQSKTQNSIDIKDLMDNINRIVLTLKGSETRFTCEYDEKTVTAVELLNKWITFCQSIIST</sequence>
<dbReference type="EMBL" id="AF009570">
    <property type="protein sequence ID" value="AAD01426.1"/>
    <property type="molecule type" value="mRNA"/>
</dbReference>
<dbReference type="SMR" id="O97513"/>
<dbReference type="GlyCosmos" id="O97513">
    <property type="glycosylation" value="1 site, No reported glycans"/>
</dbReference>
<dbReference type="GO" id="GO:0005615">
    <property type="term" value="C:extracellular space"/>
    <property type="evidence" value="ECO:0007669"/>
    <property type="project" value="UniProtKB-KW"/>
</dbReference>
<dbReference type="GO" id="GO:0005125">
    <property type="term" value="F:cytokine activity"/>
    <property type="evidence" value="ECO:0007669"/>
    <property type="project" value="UniProtKB-KW"/>
</dbReference>
<dbReference type="GO" id="GO:0008083">
    <property type="term" value="F:growth factor activity"/>
    <property type="evidence" value="ECO:0007669"/>
    <property type="project" value="UniProtKB-KW"/>
</dbReference>
<dbReference type="GO" id="GO:0005134">
    <property type="term" value="F:interleukin-2 receptor binding"/>
    <property type="evidence" value="ECO:0007669"/>
    <property type="project" value="InterPro"/>
</dbReference>
<dbReference type="GO" id="GO:0002250">
    <property type="term" value="P:adaptive immune response"/>
    <property type="evidence" value="ECO:0007669"/>
    <property type="project" value="UniProtKB-KW"/>
</dbReference>
<dbReference type="Gene3D" id="1.20.1250.10">
    <property type="match status" value="1"/>
</dbReference>
<dbReference type="InterPro" id="IPR009079">
    <property type="entry name" value="4_helix_cytokine-like_core"/>
</dbReference>
<dbReference type="InterPro" id="IPR000779">
    <property type="entry name" value="IL-2"/>
</dbReference>
<dbReference type="InterPro" id="IPR030477">
    <property type="entry name" value="IL-2_CS"/>
</dbReference>
<dbReference type="PANTHER" id="PTHR48487">
    <property type="entry name" value="INTERLEUKIN-2"/>
    <property type="match status" value="1"/>
</dbReference>
<dbReference type="PANTHER" id="PTHR48487:SF1">
    <property type="entry name" value="INTERLEUKIN-2"/>
    <property type="match status" value="1"/>
</dbReference>
<dbReference type="Pfam" id="PF00715">
    <property type="entry name" value="IL2"/>
    <property type="match status" value="1"/>
</dbReference>
<dbReference type="PRINTS" id="PR00265">
    <property type="entry name" value="INTERLEUKIN2"/>
</dbReference>
<dbReference type="SMART" id="SM00189">
    <property type="entry name" value="IL2"/>
    <property type="match status" value="1"/>
</dbReference>
<dbReference type="SUPFAM" id="SSF47266">
    <property type="entry name" value="4-helical cytokines"/>
    <property type="match status" value="1"/>
</dbReference>
<dbReference type="PROSITE" id="PS00424">
    <property type="entry name" value="INTERLEUKIN_2"/>
    <property type="match status" value="1"/>
</dbReference>
<comment type="function">
    <text evidence="2">Cytokine produced by activated CD4-positive helper T-cells and to a lesser extend activated CD8-positive T-cells and natural killer (NK) cells that plays pivotal roles in the immune response and tolerance. Binds to a receptor complex composed of either the high-affinity trimeric IL-2R (IL2RA/CD25, IL2RB/CD122 and IL2RG/CD132) or the low-affinity dimeric IL-2R (IL2RB and IL2RG). Interaction with the receptor leads to oligomerization and conformation changes in the IL-2R subunits resulting in downstream signaling starting with phosphorylation of JAK1 and JAK3. In turn, JAK1 and JAK3 phosphorylate the receptor to form a docking site leading to the phosphorylation of several substrates including STAT5. This process leads to activation of several pathways including STAT, phosphoinositide-3-kinase/PI3K and mitogen-activated protein kinase/MAPK pathways. Functions as a T-cell growth factor and can increase NK-cell cytolytic activity as well. Promotes strong proliferation of activated B-cells and subsequently immunoglobulin production. Plays a pivotal role in regulating the adaptive immune system by controlling the survival and proliferation of regulatory T-cells, which are required for the maintenance of immune tolerance. Moreover, participates in the differentiation and homeostasis of effector T-cell subsets, including Th1, Th2, Th17 as well as memory CD8-positive T-cells.</text>
</comment>
<comment type="subcellular location">
    <subcellularLocation>
        <location>Secreted</location>
    </subcellularLocation>
</comment>
<comment type="similarity">
    <text evidence="3">Belongs to the IL-2 family.</text>
</comment>
<organism>
    <name type="scientific">Orcinus orca</name>
    <name type="common">Killer whale</name>
    <name type="synonym">Delphinus orca</name>
    <dbReference type="NCBI Taxonomy" id="9733"/>
    <lineage>
        <taxon>Eukaryota</taxon>
        <taxon>Metazoa</taxon>
        <taxon>Chordata</taxon>
        <taxon>Craniata</taxon>
        <taxon>Vertebrata</taxon>
        <taxon>Euteleostomi</taxon>
        <taxon>Mammalia</taxon>
        <taxon>Eutheria</taxon>
        <taxon>Laurasiatheria</taxon>
        <taxon>Artiodactyla</taxon>
        <taxon>Whippomorpha</taxon>
        <taxon>Cetacea</taxon>
        <taxon>Odontoceti</taxon>
        <taxon>Delphinidae</taxon>
        <taxon>Orcinus</taxon>
    </lineage>
</organism>
<protein>
    <recommendedName>
        <fullName>Interleukin-2</fullName>
        <shortName>IL-2</shortName>
    </recommendedName>
    <alternativeName>
        <fullName>T-cell growth factor</fullName>
        <shortName>TCGF</shortName>
    </alternativeName>
</protein>
<reference key="1">
    <citation type="journal article" date="1998" name="Mar. Mamm. Sci.">
        <title>Isolation and expression of the interleukin-2 gene from the killer whale, Orcinus orca.</title>
        <authorList>
            <person name="Ness T.L."/>
            <person name="Bradley W.G."/>
            <person name="Reynolds J.E. III"/>
            <person name="Roess W.B."/>
        </authorList>
    </citation>
    <scope>NUCLEOTIDE SEQUENCE [MRNA]</scope>
</reference>
<gene>
    <name type="primary">IL2</name>
</gene>
<name>IL2_ORCOR</name>